<dbReference type="EMBL" id="CP000821">
    <property type="protein sequence ID" value="ABV38012.1"/>
    <property type="molecule type" value="Genomic_DNA"/>
</dbReference>
<dbReference type="RefSeq" id="WP_012143742.1">
    <property type="nucleotide sequence ID" value="NC_009831.1"/>
</dbReference>
<dbReference type="SMR" id="A8FYT9"/>
<dbReference type="STRING" id="425104.Ssed_3408"/>
<dbReference type="KEGG" id="sse:Ssed_3408"/>
<dbReference type="eggNOG" id="COG0484">
    <property type="taxonomic scope" value="Bacteria"/>
</dbReference>
<dbReference type="HOGENOM" id="CLU_017633_0_7_6"/>
<dbReference type="OrthoDB" id="9779889at2"/>
<dbReference type="Proteomes" id="UP000002015">
    <property type="component" value="Chromosome"/>
</dbReference>
<dbReference type="GO" id="GO:0005737">
    <property type="term" value="C:cytoplasm"/>
    <property type="evidence" value="ECO:0007669"/>
    <property type="project" value="UniProtKB-SubCell"/>
</dbReference>
<dbReference type="GO" id="GO:0005524">
    <property type="term" value="F:ATP binding"/>
    <property type="evidence" value="ECO:0007669"/>
    <property type="project" value="InterPro"/>
</dbReference>
<dbReference type="GO" id="GO:0031072">
    <property type="term" value="F:heat shock protein binding"/>
    <property type="evidence" value="ECO:0007669"/>
    <property type="project" value="InterPro"/>
</dbReference>
<dbReference type="GO" id="GO:0051082">
    <property type="term" value="F:unfolded protein binding"/>
    <property type="evidence" value="ECO:0007669"/>
    <property type="project" value="UniProtKB-UniRule"/>
</dbReference>
<dbReference type="GO" id="GO:0008270">
    <property type="term" value="F:zinc ion binding"/>
    <property type="evidence" value="ECO:0007669"/>
    <property type="project" value="UniProtKB-UniRule"/>
</dbReference>
<dbReference type="GO" id="GO:0051085">
    <property type="term" value="P:chaperone cofactor-dependent protein refolding"/>
    <property type="evidence" value="ECO:0007669"/>
    <property type="project" value="TreeGrafter"/>
</dbReference>
<dbReference type="GO" id="GO:0006260">
    <property type="term" value="P:DNA replication"/>
    <property type="evidence" value="ECO:0007669"/>
    <property type="project" value="UniProtKB-KW"/>
</dbReference>
<dbReference type="GO" id="GO:0042026">
    <property type="term" value="P:protein refolding"/>
    <property type="evidence" value="ECO:0007669"/>
    <property type="project" value="TreeGrafter"/>
</dbReference>
<dbReference type="GO" id="GO:0009408">
    <property type="term" value="P:response to heat"/>
    <property type="evidence" value="ECO:0007669"/>
    <property type="project" value="InterPro"/>
</dbReference>
<dbReference type="CDD" id="cd06257">
    <property type="entry name" value="DnaJ"/>
    <property type="match status" value="1"/>
</dbReference>
<dbReference type="CDD" id="cd10747">
    <property type="entry name" value="DnaJ_C"/>
    <property type="match status" value="1"/>
</dbReference>
<dbReference type="CDD" id="cd10719">
    <property type="entry name" value="DnaJ_zf"/>
    <property type="match status" value="1"/>
</dbReference>
<dbReference type="FunFam" id="1.10.287.110:FF:000003">
    <property type="entry name" value="Molecular chaperone DnaJ"/>
    <property type="match status" value="1"/>
</dbReference>
<dbReference type="FunFam" id="2.10.230.10:FF:000002">
    <property type="entry name" value="Molecular chaperone DnaJ"/>
    <property type="match status" value="1"/>
</dbReference>
<dbReference type="FunFam" id="2.60.260.20:FF:000004">
    <property type="entry name" value="Molecular chaperone DnaJ"/>
    <property type="match status" value="1"/>
</dbReference>
<dbReference type="Gene3D" id="1.10.287.110">
    <property type="entry name" value="DnaJ domain"/>
    <property type="match status" value="1"/>
</dbReference>
<dbReference type="Gene3D" id="2.10.230.10">
    <property type="entry name" value="Heat shock protein DnaJ, cysteine-rich domain"/>
    <property type="match status" value="1"/>
</dbReference>
<dbReference type="Gene3D" id="2.60.260.20">
    <property type="entry name" value="Urease metallochaperone UreE, N-terminal domain"/>
    <property type="match status" value="2"/>
</dbReference>
<dbReference type="HAMAP" id="MF_01152">
    <property type="entry name" value="DnaJ"/>
    <property type="match status" value="1"/>
</dbReference>
<dbReference type="InterPro" id="IPR012724">
    <property type="entry name" value="DnaJ"/>
</dbReference>
<dbReference type="InterPro" id="IPR002939">
    <property type="entry name" value="DnaJ_C"/>
</dbReference>
<dbReference type="InterPro" id="IPR001623">
    <property type="entry name" value="DnaJ_domain"/>
</dbReference>
<dbReference type="InterPro" id="IPR018253">
    <property type="entry name" value="DnaJ_domain_CS"/>
</dbReference>
<dbReference type="InterPro" id="IPR008971">
    <property type="entry name" value="HSP40/DnaJ_pept-bd"/>
</dbReference>
<dbReference type="InterPro" id="IPR001305">
    <property type="entry name" value="HSP_DnaJ_Cys-rich_dom"/>
</dbReference>
<dbReference type="InterPro" id="IPR036410">
    <property type="entry name" value="HSP_DnaJ_Cys-rich_dom_sf"/>
</dbReference>
<dbReference type="InterPro" id="IPR036869">
    <property type="entry name" value="J_dom_sf"/>
</dbReference>
<dbReference type="NCBIfam" id="TIGR02349">
    <property type="entry name" value="DnaJ_bact"/>
    <property type="match status" value="1"/>
</dbReference>
<dbReference type="NCBIfam" id="NF008035">
    <property type="entry name" value="PRK10767.1"/>
    <property type="match status" value="1"/>
</dbReference>
<dbReference type="PANTHER" id="PTHR43096:SF48">
    <property type="entry name" value="CHAPERONE PROTEIN DNAJ"/>
    <property type="match status" value="1"/>
</dbReference>
<dbReference type="PANTHER" id="PTHR43096">
    <property type="entry name" value="DNAJ HOMOLOG 1, MITOCHONDRIAL-RELATED"/>
    <property type="match status" value="1"/>
</dbReference>
<dbReference type="Pfam" id="PF00226">
    <property type="entry name" value="DnaJ"/>
    <property type="match status" value="1"/>
</dbReference>
<dbReference type="Pfam" id="PF01556">
    <property type="entry name" value="DnaJ_C"/>
    <property type="match status" value="1"/>
</dbReference>
<dbReference type="Pfam" id="PF00684">
    <property type="entry name" value="DnaJ_CXXCXGXG"/>
    <property type="match status" value="1"/>
</dbReference>
<dbReference type="PRINTS" id="PR00625">
    <property type="entry name" value="JDOMAIN"/>
</dbReference>
<dbReference type="SMART" id="SM00271">
    <property type="entry name" value="DnaJ"/>
    <property type="match status" value="1"/>
</dbReference>
<dbReference type="SUPFAM" id="SSF46565">
    <property type="entry name" value="Chaperone J-domain"/>
    <property type="match status" value="1"/>
</dbReference>
<dbReference type="SUPFAM" id="SSF57938">
    <property type="entry name" value="DnaJ/Hsp40 cysteine-rich domain"/>
    <property type="match status" value="1"/>
</dbReference>
<dbReference type="SUPFAM" id="SSF49493">
    <property type="entry name" value="HSP40/DnaJ peptide-binding domain"/>
    <property type="match status" value="2"/>
</dbReference>
<dbReference type="PROSITE" id="PS00636">
    <property type="entry name" value="DNAJ_1"/>
    <property type="match status" value="1"/>
</dbReference>
<dbReference type="PROSITE" id="PS50076">
    <property type="entry name" value="DNAJ_2"/>
    <property type="match status" value="1"/>
</dbReference>
<dbReference type="PROSITE" id="PS51188">
    <property type="entry name" value="ZF_CR"/>
    <property type="match status" value="1"/>
</dbReference>
<name>DNAJ_SHESH</name>
<protein>
    <recommendedName>
        <fullName evidence="1">Chaperone protein DnaJ</fullName>
    </recommendedName>
</protein>
<sequence>MSKRDYYEVLSVSRDASEREIKKAYKRLAMKFHPDRNPGDKQAEANFKEVKEAYEILTDADKKAAYDQFGHAGVDPNRGGGGFGGNADFGDVFGDVFGDIFGGGRRGGGQRQAARGSDLRYNLELSLEEAVKGLTKELRIPTLAACDSCDGSGAKKGTSPTTCGTCHGQGQVQMRQGFFAVQQACPTCHGRGKIIKDPCNKCHGEGRVEKSKTLSVKIPAGVDNGDRIRLSGEGEAGEFGAPPGDLYVQVSVREHTIFVRDGNNLYCEVPISFSKAALGGEIEVPTLDGKVNLKIPAETQTGRMFRMRGKGVKSVRSHAVGDLLCKVVMETPVKLNERQKELLREFDETLTGSSSKKHSPKAEGFFDGVKKFFQDLNS</sequence>
<feature type="chain" id="PRO_1000085297" description="Chaperone protein DnaJ">
    <location>
        <begin position="1"/>
        <end position="378"/>
    </location>
</feature>
<feature type="domain" description="J" evidence="1">
    <location>
        <begin position="5"/>
        <end position="70"/>
    </location>
</feature>
<feature type="repeat" description="CXXCXGXG motif">
    <location>
        <begin position="146"/>
        <end position="153"/>
    </location>
</feature>
<feature type="repeat" description="CXXCXGXG motif">
    <location>
        <begin position="163"/>
        <end position="170"/>
    </location>
</feature>
<feature type="repeat" description="CXXCXGXG motif">
    <location>
        <begin position="185"/>
        <end position="192"/>
    </location>
</feature>
<feature type="repeat" description="CXXCXGXG motif">
    <location>
        <begin position="199"/>
        <end position="206"/>
    </location>
</feature>
<feature type="zinc finger region" description="CR-type" evidence="1">
    <location>
        <begin position="133"/>
        <end position="211"/>
    </location>
</feature>
<feature type="binding site" evidence="1">
    <location>
        <position position="146"/>
    </location>
    <ligand>
        <name>Zn(2+)</name>
        <dbReference type="ChEBI" id="CHEBI:29105"/>
        <label>1</label>
    </ligand>
</feature>
<feature type="binding site" evidence="1">
    <location>
        <position position="149"/>
    </location>
    <ligand>
        <name>Zn(2+)</name>
        <dbReference type="ChEBI" id="CHEBI:29105"/>
        <label>1</label>
    </ligand>
</feature>
<feature type="binding site" evidence="1">
    <location>
        <position position="163"/>
    </location>
    <ligand>
        <name>Zn(2+)</name>
        <dbReference type="ChEBI" id="CHEBI:29105"/>
        <label>2</label>
    </ligand>
</feature>
<feature type="binding site" evidence="1">
    <location>
        <position position="166"/>
    </location>
    <ligand>
        <name>Zn(2+)</name>
        <dbReference type="ChEBI" id="CHEBI:29105"/>
        <label>2</label>
    </ligand>
</feature>
<feature type="binding site" evidence="1">
    <location>
        <position position="185"/>
    </location>
    <ligand>
        <name>Zn(2+)</name>
        <dbReference type="ChEBI" id="CHEBI:29105"/>
        <label>2</label>
    </ligand>
</feature>
<feature type="binding site" evidence="1">
    <location>
        <position position="188"/>
    </location>
    <ligand>
        <name>Zn(2+)</name>
        <dbReference type="ChEBI" id="CHEBI:29105"/>
        <label>2</label>
    </ligand>
</feature>
<feature type="binding site" evidence="1">
    <location>
        <position position="199"/>
    </location>
    <ligand>
        <name>Zn(2+)</name>
        <dbReference type="ChEBI" id="CHEBI:29105"/>
        <label>1</label>
    </ligand>
</feature>
<feature type="binding site" evidence="1">
    <location>
        <position position="202"/>
    </location>
    <ligand>
        <name>Zn(2+)</name>
        <dbReference type="ChEBI" id="CHEBI:29105"/>
        <label>1</label>
    </ligand>
</feature>
<reference key="1">
    <citation type="submission" date="2007-08" db="EMBL/GenBank/DDBJ databases">
        <title>Complete sequence of Shewanella sediminis HAW-EB3.</title>
        <authorList>
            <consortium name="US DOE Joint Genome Institute"/>
            <person name="Copeland A."/>
            <person name="Lucas S."/>
            <person name="Lapidus A."/>
            <person name="Barry K."/>
            <person name="Glavina del Rio T."/>
            <person name="Dalin E."/>
            <person name="Tice H."/>
            <person name="Pitluck S."/>
            <person name="Chertkov O."/>
            <person name="Brettin T."/>
            <person name="Bruce D."/>
            <person name="Detter J.C."/>
            <person name="Han C."/>
            <person name="Schmutz J."/>
            <person name="Larimer F."/>
            <person name="Land M."/>
            <person name="Hauser L."/>
            <person name="Kyrpides N."/>
            <person name="Kim E."/>
            <person name="Zhao J.-S."/>
            <person name="Richardson P."/>
        </authorList>
    </citation>
    <scope>NUCLEOTIDE SEQUENCE [LARGE SCALE GENOMIC DNA]</scope>
    <source>
        <strain>HAW-EB3</strain>
    </source>
</reference>
<gene>
    <name evidence="1" type="primary">dnaJ</name>
    <name type="ordered locus">Ssed_3408</name>
</gene>
<accession>A8FYT9</accession>
<organism>
    <name type="scientific">Shewanella sediminis (strain HAW-EB3)</name>
    <dbReference type="NCBI Taxonomy" id="425104"/>
    <lineage>
        <taxon>Bacteria</taxon>
        <taxon>Pseudomonadati</taxon>
        <taxon>Pseudomonadota</taxon>
        <taxon>Gammaproteobacteria</taxon>
        <taxon>Alteromonadales</taxon>
        <taxon>Shewanellaceae</taxon>
        <taxon>Shewanella</taxon>
    </lineage>
</organism>
<comment type="function">
    <text evidence="1">Participates actively in the response to hyperosmotic and heat shock by preventing the aggregation of stress-denatured proteins and by disaggregating proteins, also in an autonomous, DnaK-independent fashion. Unfolded proteins bind initially to DnaJ; upon interaction with the DnaJ-bound protein, DnaK hydrolyzes its bound ATP, resulting in the formation of a stable complex. GrpE releases ADP from DnaK; ATP binding to DnaK triggers the release of the substrate protein, thus completing the reaction cycle. Several rounds of ATP-dependent interactions between DnaJ, DnaK and GrpE are required for fully efficient folding. Also involved, together with DnaK and GrpE, in the DNA replication of plasmids through activation of initiation proteins.</text>
</comment>
<comment type="cofactor">
    <cofactor evidence="1">
        <name>Zn(2+)</name>
        <dbReference type="ChEBI" id="CHEBI:29105"/>
    </cofactor>
    <text evidence="1">Binds 2 Zn(2+) ions per monomer.</text>
</comment>
<comment type="subunit">
    <text evidence="1">Homodimer.</text>
</comment>
<comment type="subcellular location">
    <subcellularLocation>
        <location evidence="1">Cytoplasm</location>
    </subcellularLocation>
</comment>
<comment type="domain">
    <text evidence="1">The J domain is necessary and sufficient to stimulate DnaK ATPase activity. Zinc center 1 plays an important role in the autonomous, DnaK-independent chaperone activity of DnaJ. Zinc center 2 is essential for interaction with DnaK and for DnaJ activity.</text>
</comment>
<comment type="similarity">
    <text evidence="1">Belongs to the DnaJ family.</text>
</comment>
<proteinExistence type="inferred from homology"/>
<evidence type="ECO:0000255" key="1">
    <source>
        <dbReference type="HAMAP-Rule" id="MF_01152"/>
    </source>
</evidence>
<keyword id="KW-0143">Chaperone</keyword>
<keyword id="KW-0963">Cytoplasm</keyword>
<keyword id="KW-0235">DNA replication</keyword>
<keyword id="KW-0479">Metal-binding</keyword>
<keyword id="KW-1185">Reference proteome</keyword>
<keyword id="KW-0677">Repeat</keyword>
<keyword id="KW-0346">Stress response</keyword>
<keyword id="KW-0862">Zinc</keyword>
<keyword id="KW-0863">Zinc-finger</keyword>